<comment type="function">
    <text evidence="1">Binds to the 23S rRNA.</text>
</comment>
<comment type="subunit">
    <text evidence="1">Part of the 50S ribosomal subunit.</text>
</comment>
<comment type="similarity">
    <text evidence="1">Belongs to the universal ribosomal protein uL15 family.</text>
</comment>
<protein>
    <recommendedName>
        <fullName evidence="1">Large ribosomal subunit protein uL15</fullName>
    </recommendedName>
    <alternativeName>
        <fullName evidence="3">50S ribosomal protein L15</fullName>
    </alternativeName>
</protein>
<accession>B8ISA4</accession>
<keyword id="KW-1185">Reference proteome</keyword>
<keyword id="KW-0687">Ribonucleoprotein</keyword>
<keyword id="KW-0689">Ribosomal protein</keyword>
<keyword id="KW-0694">RNA-binding</keyword>
<keyword id="KW-0699">rRNA-binding</keyword>
<proteinExistence type="inferred from homology"/>
<gene>
    <name evidence="1" type="primary">rplO</name>
    <name type="ordered locus">Mnod_1927</name>
</gene>
<name>RL15_METNO</name>
<sequence>MKLNEIRDNEGATKNRMRVGRGIGSGKGKTAGRGVKGQKARTGVAIKGFEGGQMPLHRRLPKRGFTNPGATDLNEVNIGRIQQAVDAGKLDPSAPVTVEALLAAGIVSRVRDGVKILGVGELSAKLTFQVARASKSAVAAIEKAGGSVTQSLAATDGAVASA</sequence>
<organism>
    <name type="scientific">Methylobacterium nodulans (strain LMG 21967 / CNCM I-2342 / ORS 2060)</name>
    <dbReference type="NCBI Taxonomy" id="460265"/>
    <lineage>
        <taxon>Bacteria</taxon>
        <taxon>Pseudomonadati</taxon>
        <taxon>Pseudomonadota</taxon>
        <taxon>Alphaproteobacteria</taxon>
        <taxon>Hyphomicrobiales</taxon>
        <taxon>Methylobacteriaceae</taxon>
        <taxon>Methylobacterium</taxon>
    </lineage>
</organism>
<feature type="chain" id="PRO_1000166305" description="Large ribosomal subunit protein uL15">
    <location>
        <begin position="1"/>
        <end position="162"/>
    </location>
</feature>
<feature type="region of interest" description="Disordered" evidence="2">
    <location>
        <begin position="1"/>
        <end position="37"/>
    </location>
</feature>
<feature type="compositionally biased region" description="Basic and acidic residues" evidence="2">
    <location>
        <begin position="1"/>
        <end position="13"/>
    </location>
</feature>
<feature type="compositionally biased region" description="Gly residues" evidence="2">
    <location>
        <begin position="21"/>
        <end position="35"/>
    </location>
</feature>
<reference key="1">
    <citation type="submission" date="2009-01" db="EMBL/GenBank/DDBJ databases">
        <title>Complete sequence of chromosome of Methylobacterium nodulans ORS 2060.</title>
        <authorList>
            <consortium name="US DOE Joint Genome Institute"/>
            <person name="Lucas S."/>
            <person name="Copeland A."/>
            <person name="Lapidus A."/>
            <person name="Glavina del Rio T."/>
            <person name="Dalin E."/>
            <person name="Tice H."/>
            <person name="Bruce D."/>
            <person name="Goodwin L."/>
            <person name="Pitluck S."/>
            <person name="Sims D."/>
            <person name="Brettin T."/>
            <person name="Detter J.C."/>
            <person name="Han C."/>
            <person name="Larimer F."/>
            <person name="Land M."/>
            <person name="Hauser L."/>
            <person name="Kyrpides N."/>
            <person name="Ivanova N."/>
            <person name="Marx C.J."/>
            <person name="Richardson P."/>
        </authorList>
    </citation>
    <scope>NUCLEOTIDE SEQUENCE [LARGE SCALE GENOMIC DNA]</scope>
    <source>
        <strain>LMG 21967 / CNCM I-2342 / ORS 2060</strain>
    </source>
</reference>
<dbReference type="EMBL" id="CP001349">
    <property type="protein sequence ID" value="ACL56916.1"/>
    <property type="molecule type" value="Genomic_DNA"/>
</dbReference>
<dbReference type="RefSeq" id="WP_015928605.1">
    <property type="nucleotide sequence ID" value="NC_011894.1"/>
</dbReference>
<dbReference type="SMR" id="B8ISA4"/>
<dbReference type="STRING" id="460265.Mnod_1927"/>
<dbReference type="KEGG" id="mno:Mnod_1927"/>
<dbReference type="eggNOG" id="COG0200">
    <property type="taxonomic scope" value="Bacteria"/>
</dbReference>
<dbReference type="HOGENOM" id="CLU_055188_4_0_5"/>
<dbReference type="OrthoDB" id="9810293at2"/>
<dbReference type="Proteomes" id="UP000008207">
    <property type="component" value="Chromosome"/>
</dbReference>
<dbReference type="GO" id="GO:0022625">
    <property type="term" value="C:cytosolic large ribosomal subunit"/>
    <property type="evidence" value="ECO:0007669"/>
    <property type="project" value="TreeGrafter"/>
</dbReference>
<dbReference type="GO" id="GO:0019843">
    <property type="term" value="F:rRNA binding"/>
    <property type="evidence" value="ECO:0007669"/>
    <property type="project" value="UniProtKB-UniRule"/>
</dbReference>
<dbReference type="GO" id="GO:0003735">
    <property type="term" value="F:structural constituent of ribosome"/>
    <property type="evidence" value="ECO:0007669"/>
    <property type="project" value="InterPro"/>
</dbReference>
<dbReference type="GO" id="GO:0006412">
    <property type="term" value="P:translation"/>
    <property type="evidence" value="ECO:0007669"/>
    <property type="project" value="UniProtKB-UniRule"/>
</dbReference>
<dbReference type="Gene3D" id="3.100.10.10">
    <property type="match status" value="1"/>
</dbReference>
<dbReference type="HAMAP" id="MF_01341">
    <property type="entry name" value="Ribosomal_uL15"/>
    <property type="match status" value="1"/>
</dbReference>
<dbReference type="InterPro" id="IPR030878">
    <property type="entry name" value="Ribosomal_uL15"/>
</dbReference>
<dbReference type="InterPro" id="IPR021131">
    <property type="entry name" value="Ribosomal_uL15/eL18"/>
</dbReference>
<dbReference type="InterPro" id="IPR036227">
    <property type="entry name" value="Ribosomal_uL15/eL18_sf"/>
</dbReference>
<dbReference type="InterPro" id="IPR005749">
    <property type="entry name" value="Ribosomal_uL15_bac-type"/>
</dbReference>
<dbReference type="InterPro" id="IPR001196">
    <property type="entry name" value="Ribosomal_uL15_CS"/>
</dbReference>
<dbReference type="NCBIfam" id="TIGR01071">
    <property type="entry name" value="rplO_bact"/>
    <property type="match status" value="1"/>
</dbReference>
<dbReference type="PANTHER" id="PTHR12934">
    <property type="entry name" value="50S RIBOSOMAL PROTEIN L15"/>
    <property type="match status" value="1"/>
</dbReference>
<dbReference type="PANTHER" id="PTHR12934:SF11">
    <property type="entry name" value="LARGE RIBOSOMAL SUBUNIT PROTEIN UL15M"/>
    <property type="match status" value="1"/>
</dbReference>
<dbReference type="Pfam" id="PF00828">
    <property type="entry name" value="Ribosomal_L27A"/>
    <property type="match status" value="1"/>
</dbReference>
<dbReference type="SUPFAM" id="SSF52080">
    <property type="entry name" value="Ribosomal proteins L15p and L18e"/>
    <property type="match status" value="1"/>
</dbReference>
<dbReference type="PROSITE" id="PS00475">
    <property type="entry name" value="RIBOSOMAL_L15"/>
    <property type="match status" value="1"/>
</dbReference>
<evidence type="ECO:0000255" key="1">
    <source>
        <dbReference type="HAMAP-Rule" id="MF_01341"/>
    </source>
</evidence>
<evidence type="ECO:0000256" key="2">
    <source>
        <dbReference type="SAM" id="MobiDB-lite"/>
    </source>
</evidence>
<evidence type="ECO:0000305" key="3"/>